<feature type="chain" id="PRO_1000083769" description="Nascent polypeptide-associated complex protein">
    <location>
        <begin position="1"/>
        <end position="125"/>
    </location>
</feature>
<feature type="domain" description="NAC-A/B" evidence="1">
    <location>
        <begin position="9"/>
        <end position="76"/>
    </location>
</feature>
<sequence length="125" mass="14047">MFPGGKMNPRMMKQMQKMMKDFGMDSEDLKAVKVTIELEDKIMVFDKPKVQVMDMMGTKTYTISGRSKNTSKTAEKIEDTEVKVEVTEEDIEMVATQCNVSKEEAKTALEDVNGDLAEAILKLGN</sequence>
<dbReference type="EMBL" id="CP000742">
    <property type="protein sequence ID" value="ABR55198.1"/>
    <property type="molecule type" value="Genomic_DNA"/>
</dbReference>
<dbReference type="RefSeq" id="WP_012066113.1">
    <property type="nucleotide sequence ID" value="NC_009634.1"/>
</dbReference>
<dbReference type="SMR" id="A6URS6"/>
<dbReference type="STRING" id="406327.Mevan_1301"/>
<dbReference type="GeneID" id="5324790"/>
<dbReference type="KEGG" id="mvn:Mevan_1301"/>
<dbReference type="eggNOG" id="arCOG04061">
    <property type="taxonomic scope" value="Archaea"/>
</dbReference>
<dbReference type="HOGENOM" id="CLU_146475_1_0_2"/>
<dbReference type="OrthoDB" id="53273at2157"/>
<dbReference type="Proteomes" id="UP000001107">
    <property type="component" value="Chromosome"/>
</dbReference>
<dbReference type="GO" id="GO:0003723">
    <property type="term" value="F:RNA binding"/>
    <property type="evidence" value="ECO:0007669"/>
    <property type="project" value="UniProtKB-UniRule"/>
</dbReference>
<dbReference type="GO" id="GO:0015031">
    <property type="term" value="P:protein transport"/>
    <property type="evidence" value="ECO:0007669"/>
    <property type="project" value="UniProtKB-UniRule"/>
</dbReference>
<dbReference type="CDD" id="cd14359">
    <property type="entry name" value="UBA_AeNAC"/>
    <property type="match status" value="1"/>
</dbReference>
<dbReference type="Gene3D" id="1.10.8.10">
    <property type="entry name" value="DNA helicase RuvA subunit, C-terminal domain"/>
    <property type="match status" value="1"/>
</dbReference>
<dbReference type="Gene3D" id="2.20.70.30">
    <property type="entry name" value="Nascent polypeptide-associated complex domain"/>
    <property type="match status" value="1"/>
</dbReference>
<dbReference type="HAMAP" id="MF_00814">
    <property type="entry name" value="NAC_arch"/>
    <property type="match status" value="1"/>
</dbReference>
<dbReference type="InterPro" id="IPR044034">
    <property type="entry name" value="NAC-like_UBA"/>
</dbReference>
<dbReference type="InterPro" id="IPR038187">
    <property type="entry name" value="NAC_A/B_dom_sf"/>
</dbReference>
<dbReference type="InterPro" id="IPR005231">
    <property type="entry name" value="NAC_arc"/>
</dbReference>
<dbReference type="InterPro" id="IPR002715">
    <property type="entry name" value="Nas_poly-pep-assoc_cplx_dom"/>
</dbReference>
<dbReference type="InterPro" id="IPR009060">
    <property type="entry name" value="UBA-like_sf"/>
</dbReference>
<dbReference type="NCBIfam" id="TIGR00264">
    <property type="entry name" value="archaeal-type nascent polypeptide-associated complex protein"/>
    <property type="match status" value="1"/>
</dbReference>
<dbReference type="Pfam" id="PF01849">
    <property type="entry name" value="NAC"/>
    <property type="match status" value="1"/>
</dbReference>
<dbReference type="Pfam" id="PF19026">
    <property type="entry name" value="UBA_HYPK"/>
    <property type="match status" value="1"/>
</dbReference>
<dbReference type="SMART" id="SM01407">
    <property type="entry name" value="NAC"/>
    <property type="match status" value="1"/>
</dbReference>
<dbReference type="SUPFAM" id="SSF46934">
    <property type="entry name" value="UBA-like"/>
    <property type="match status" value="1"/>
</dbReference>
<dbReference type="PROSITE" id="PS51151">
    <property type="entry name" value="NAC_AB"/>
    <property type="match status" value="1"/>
</dbReference>
<protein>
    <recommendedName>
        <fullName evidence="1">Nascent polypeptide-associated complex protein</fullName>
    </recommendedName>
</protein>
<comment type="function">
    <text evidence="1">Contacts the emerging nascent chain on the ribosome.</text>
</comment>
<comment type="subunit">
    <text evidence="1">Homodimer. Interacts with the ribosome. Binds ribosomal RNA.</text>
</comment>
<comment type="similarity">
    <text evidence="1">Belongs to the NAC-alpha family.</text>
</comment>
<gene>
    <name evidence="1" type="primary">nac</name>
    <name type="ordered locus">Mevan_1301</name>
</gene>
<reference key="1">
    <citation type="submission" date="2007-06" db="EMBL/GenBank/DDBJ databases">
        <title>Complete sequence of Methanococcus vannielii SB.</title>
        <authorList>
            <consortium name="US DOE Joint Genome Institute"/>
            <person name="Copeland A."/>
            <person name="Lucas S."/>
            <person name="Lapidus A."/>
            <person name="Barry K."/>
            <person name="Glavina del Rio T."/>
            <person name="Dalin E."/>
            <person name="Tice H."/>
            <person name="Pitluck S."/>
            <person name="Chain P."/>
            <person name="Malfatti S."/>
            <person name="Shin M."/>
            <person name="Vergez L."/>
            <person name="Schmutz J."/>
            <person name="Larimer F."/>
            <person name="Land M."/>
            <person name="Hauser L."/>
            <person name="Kyrpides N."/>
            <person name="Anderson I."/>
            <person name="Sieprawska-Lupa M."/>
            <person name="Whitman W.B."/>
            <person name="Richardson P."/>
        </authorList>
    </citation>
    <scope>NUCLEOTIDE SEQUENCE [LARGE SCALE GENOMIC DNA]</scope>
    <source>
        <strain>ATCC 35089 / DSM 1224 / JCM 13029 / OCM 148 / SB</strain>
    </source>
</reference>
<accession>A6URS6</accession>
<proteinExistence type="inferred from homology"/>
<organism>
    <name type="scientific">Methanococcus vannielii (strain ATCC 35089 / DSM 1224 / JCM 13029 / OCM 148 / SB)</name>
    <dbReference type="NCBI Taxonomy" id="406327"/>
    <lineage>
        <taxon>Archaea</taxon>
        <taxon>Methanobacteriati</taxon>
        <taxon>Methanobacteriota</taxon>
        <taxon>Methanomada group</taxon>
        <taxon>Methanococci</taxon>
        <taxon>Methanococcales</taxon>
        <taxon>Methanococcaceae</taxon>
        <taxon>Methanococcus</taxon>
    </lineage>
</organism>
<name>NAC_METVS</name>
<keyword id="KW-0653">Protein transport</keyword>
<keyword id="KW-0694">RNA-binding</keyword>
<keyword id="KW-0813">Transport</keyword>
<evidence type="ECO:0000255" key="1">
    <source>
        <dbReference type="HAMAP-Rule" id="MF_00814"/>
    </source>
</evidence>